<name>ERA_THEMA</name>
<protein>
    <recommendedName>
        <fullName evidence="1">GTPase Era</fullName>
    </recommendedName>
</protein>
<feature type="chain" id="PRO_0000180066" description="GTPase Era">
    <location>
        <begin position="1"/>
        <end position="300"/>
    </location>
</feature>
<feature type="domain" description="Era-type G" evidence="2">
    <location>
        <begin position="4"/>
        <end position="172"/>
    </location>
</feature>
<feature type="domain" description="KH type-2" evidence="1">
    <location>
        <begin position="195"/>
        <end position="280"/>
    </location>
</feature>
<feature type="region of interest" description="G1" evidence="2">
    <location>
        <begin position="12"/>
        <end position="19"/>
    </location>
</feature>
<feature type="region of interest" description="G2" evidence="2">
    <location>
        <begin position="38"/>
        <end position="42"/>
    </location>
</feature>
<feature type="region of interest" description="G3" evidence="2">
    <location>
        <begin position="59"/>
        <end position="62"/>
    </location>
</feature>
<feature type="region of interest" description="G4" evidence="2">
    <location>
        <begin position="121"/>
        <end position="124"/>
    </location>
</feature>
<feature type="region of interest" description="G5" evidence="2">
    <location>
        <begin position="151"/>
        <end position="153"/>
    </location>
</feature>
<feature type="binding site" evidence="1">
    <location>
        <begin position="12"/>
        <end position="19"/>
    </location>
    <ligand>
        <name>GTP</name>
        <dbReference type="ChEBI" id="CHEBI:37565"/>
    </ligand>
</feature>
<feature type="binding site" evidence="1">
    <location>
        <begin position="59"/>
        <end position="63"/>
    </location>
    <ligand>
        <name>GTP</name>
        <dbReference type="ChEBI" id="CHEBI:37565"/>
    </ligand>
</feature>
<feature type="binding site" evidence="1">
    <location>
        <begin position="121"/>
        <end position="124"/>
    </location>
    <ligand>
        <name>GTP</name>
        <dbReference type="ChEBI" id="CHEBI:37565"/>
    </ligand>
</feature>
<reference key="1">
    <citation type="journal article" date="1999" name="Nature">
        <title>Evidence for lateral gene transfer between Archaea and Bacteria from genome sequence of Thermotoga maritima.</title>
        <authorList>
            <person name="Nelson K.E."/>
            <person name="Clayton R.A."/>
            <person name="Gill S.R."/>
            <person name="Gwinn M.L."/>
            <person name="Dodson R.J."/>
            <person name="Haft D.H."/>
            <person name="Hickey E.K."/>
            <person name="Peterson J.D."/>
            <person name="Nelson W.C."/>
            <person name="Ketchum K.A."/>
            <person name="McDonald L.A."/>
            <person name="Utterback T.R."/>
            <person name="Malek J.A."/>
            <person name="Linher K.D."/>
            <person name="Garrett M.M."/>
            <person name="Stewart A.M."/>
            <person name="Cotton M.D."/>
            <person name="Pratt M.S."/>
            <person name="Phillips C.A."/>
            <person name="Richardson D.L."/>
            <person name="Heidelberg J.F."/>
            <person name="Sutton G.G."/>
            <person name="Fleischmann R.D."/>
            <person name="Eisen J.A."/>
            <person name="White O."/>
            <person name="Salzberg S.L."/>
            <person name="Smith H.O."/>
            <person name="Venter J.C."/>
            <person name="Fraser C.M."/>
        </authorList>
    </citation>
    <scope>NUCLEOTIDE SEQUENCE [LARGE SCALE GENOMIC DNA]</scope>
    <source>
        <strain>ATCC 43589 / DSM 3109 / JCM 10099 / NBRC 100826 / MSB8</strain>
    </source>
</reference>
<keyword id="KW-0997">Cell inner membrane</keyword>
<keyword id="KW-1003">Cell membrane</keyword>
<keyword id="KW-0963">Cytoplasm</keyword>
<keyword id="KW-0342">GTP-binding</keyword>
<keyword id="KW-0472">Membrane</keyword>
<keyword id="KW-0547">Nucleotide-binding</keyword>
<keyword id="KW-1185">Reference proteome</keyword>
<keyword id="KW-0690">Ribosome biogenesis</keyword>
<keyword id="KW-0694">RNA-binding</keyword>
<keyword id="KW-0699">rRNA-binding</keyword>
<organism>
    <name type="scientific">Thermotoga maritima (strain ATCC 43589 / DSM 3109 / JCM 10099 / NBRC 100826 / MSB8)</name>
    <dbReference type="NCBI Taxonomy" id="243274"/>
    <lineage>
        <taxon>Bacteria</taxon>
        <taxon>Thermotogati</taxon>
        <taxon>Thermotogota</taxon>
        <taxon>Thermotogae</taxon>
        <taxon>Thermotogales</taxon>
        <taxon>Thermotogaceae</taxon>
        <taxon>Thermotoga</taxon>
    </lineage>
</organism>
<gene>
    <name evidence="1" type="primary">era</name>
    <name type="ordered locus">TM_0847</name>
</gene>
<evidence type="ECO:0000255" key="1">
    <source>
        <dbReference type="HAMAP-Rule" id="MF_00367"/>
    </source>
</evidence>
<evidence type="ECO:0000255" key="2">
    <source>
        <dbReference type="PROSITE-ProRule" id="PRU01050"/>
    </source>
</evidence>
<proteinExistence type="inferred from homology"/>
<accession>Q9WZV1</accession>
<dbReference type="EMBL" id="AE000512">
    <property type="protein sequence ID" value="AAD35929.1"/>
    <property type="molecule type" value="Genomic_DNA"/>
</dbReference>
<dbReference type="PIR" id="H72326">
    <property type="entry name" value="H72326"/>
</dbReference>
<dbReference type="RefSeq" id="NP_228656.1">
    <property type="nucleotide sequence ID" value="NC_000853.1"/>
</dbReference>
<dbReference type="SMR" id="Q9WZV1"/>
<dbReference type="FunCoup" id="Q9WZV1">
    <property type="interactions" value="357"/>
</dbReference>
<dbReference type="STRING" id="243274.TM_0847"/>
<dbReference type="PaxDb" id="243274-THEMA_00405"/>
<dbReference type="EnsemblBacteria" id="AAD35929">
    <property type="protein sequence ID" value="AAD35929"/>
    <property type="gene ID" value="TM_0847"/>
</dbReference>
<dbReference type="KEGG" id="tma:TM0847"/>
<dbReference type="KEGG" id="tmm:Tmari_0849"/>
<dbReference type="KEGG" id="tmw:THMA_0868"/>
<dbReference type="eggNOG" id="COG1159">
    <property type="taxonomic scope" value="Bacteria"/>
</dbReference>
<dbReference type="InParanoid" id="Q9WZV1"/>
<dbReference type="OrthoDB" id="9805918at2"/>
<dbReference type="Proteomes" id="UP000008183">
    <property type="component" value="Chromosome"/>
</dbReference>
<dbReference type="GO" id="GO:0005829">
    <property type="term" value="C:cytosol"/>
    <property type="evidence" value="ECO:0000318"/>
    <property type="project" value="GO_Central"/>
</dbReference>
<dbReference type="GO" id="GO:0005886">
    <property type="term" value="C:plasma membrane"/>
    <property type="evidence" value="ECO:0007669"/>
    <property type="project" value="UniProtKB-SubCell"/>
</dbReference>
<dbReference type="GO" id="GO:0005525">
    <property type="term" value="F:GTP binding"/>
    <property type="evidence" value="ECO:0007669"/>
    <property type="project" value="UniProtKB-UniRule"/>
</dbReference>
<dbReference type="GO" id="GO:0003924">
    <property type="term" value="F:GTPase activity"/>
    <property type="evidence" value="ECO:0007669"/>
    <property type="project" value="UniProtKB-UniRule"/>
</dbReference>
<dbReference type="GO" id="GO:0043024">
    <property type="term" value="F:ribosomal small subunit binding"/>
    <property type="evidence" value="ECO:0000318"/>
    <property type="project" value="GO_Central"/>
</dbReference>
<dbReference type="GO" id="GO:0019843">
    <property type="term" value="F:rRNA binding"/>
    <property type="evidence" value="ECO:0000318"/>
    <property type="project" value="GO_Central"/>
</dbReference>
<dbReference type="GO" id="GO:0070181">
    <property type="term" value="F:small ribosomal subunit rRNA binding"/>
    <property type="evidence" value="ECO:0007669"/>
    <property type="project" value="UniProtKB-UniRule"/>
</dbReference>
<dbReference type="GO" id="GO:0000028">
    <property type="term" value="P:ribosomal small subunit assembly"/>
    <property type="evidence" value="ECO:0000318"/>
    <property type="project" value="GO_Central"/>
</dbReference>
<dbReference type="CDD" id="cd04163">
    <property type="entry name" value="Era"/>
    <property type="match status" value="1"/>
</dbReference>
<dbReference type="CDD" id="cd22534">
    <property type="entry name" value="KH-II_Era"/>
    <property type="match status" value="1"/>
</dbReference>
<dbReference type="FunFam" id="3.30.300.20:FF:000003">
    <property type="entry name" value="GTPase Era"/>
    <property type="match status" value="1"/>
</dbReference>
<dbReference type="FunFam" id="3.40.50.300:FF:000094">
    <property type="entry name" value="GTPase Era"/>
    <property type="match status" value="1"/>
</dbReference>
<dbReference type="Gene3D" id="3.30.300.20">
    <property type="match status" value="1"/>
</dbReference>
<dbReference type="Gene3D" id="3.40.50.300">
    <property type="entry name" value="P-loop containing nucleotide triphosphate hydrolases"/>
    <property type="match status" value="1"/>
</dbReference>
<dbReference type="HAMAP" id="MF_00367">
    <property type="entry name" value="GTPase_Era"/>
    <property type="match status" value="1"/>
</dbReference>
<dbReference type="InterPro" id="IPR030388">
    <property type="entry name" value="G_ERA_dom"/>
</dbReference>
<dbReference type="InterPro" id="IPR006073">
    <property type="entry name" value="GTP-bd"/>
</dbReference>
<dbReference type="InterPro" id="IPR005662">
    <property type="entry name" value="GTPase_Era-like"/>
</dbReference>
<dbReference type="InterPro" id="IPR015946">
    <property type="entry name" value="KH_dom-like_a/b"/>
</dbReference>
<dbReference type="InterPro" id="IPR004044">
    <property type="entry name" value="KH_dom_type_2"/>
</dbReference>
<dbReference type="InterPro" id="IPR009019">
    <property type="entry name" value="KH_sf_prok-type"/>
</dbReference>
<dbReference type="InterPro" id="IPR027417">
    <property type="entry name" value="P-loop_NTPase"/>
</dbReference>
<dbReference type="InterPro" id="IPR005225">
    <property type="entry name" value="Small_GTP-bd"/>
</dbReference>
<dbReference type="NCBIfam" id="TIGR00436">
    <property type="entry name" value="era"/>
    <property type="match status" value="1"/>
</dbReference>
<dbReference type="NCBIfam" id="NF000908">
    <property type="entry name" value="PRK00089.1"/>
    <property type="match status" value="1"/>
</dbReference>
<dbReference type="NCBIfam" id="TIGR00231">
    <property type="entry name" value="small_GTP"/>
    <property type="match status" value="1"/>
</dbReference>
<dbReference type="PANTHER" id="PTHR42698">
    <property type="entry name" value="GTPASE ERA"/>
    <property type="match status" value="1"/>
</dbReference>
<dbReference type="PANTHER" id="PTHR42698:SF1">
    <property type="entry name" value="GTPASE ERA, MITOCHONDRIAL"/>
    <property type="match status" value="1"/>
</dbReference>
<dbReference type="Pfam" id="PF07650">
    <property type="entry name" value="KH_2"/>
    <property type="match status" value="1"/>
</dbReference>
<dbReference type="Pfam" id="PF01926">
    <property type="entry name" value="MMR_HSR1"/>
    <property type="match status" value="1"/>
</dbReference>
<dbReference type="PRINTS" id="PR00326">
    <property type="entry name" value="GTP1OBG"/>
</dbReference>
<dbReference type="SUPFAM" id="SSF52540">
    <property type="entry name" value="P-loop containing nucleoside triphosphate hydrolases"/>
    <property type="match status" value="1"/>
</dbReference>
<dbReference type="SUPFAM" id="SSF54814">
    <property type="entry name" value="Prokaryotic type KH domain (KH-domain type II)"/>
    <property type="match status" value="1"/>
</dbReference>
<dbReference type="PROSITE" id="PS51713">
    <property type="entry name" value="G_ERA"/>
    <property type="match status" value="1"/>
</dbReference>
<dbReference type="PROSITE" id="PS50823">
    <property type="entry name" value="KH_TYPE_2"/>
    <property type="match status" value="1"/>
</dbReference>
<sequence length="300" mass="33521">MSIKSGFVALAGKPNVGKSTFINAVMGRKVVIVSDKPQTTRNRINCIYTDKDSQIIFVDTPGIHKPLHRLGEYMVKAAVQALKGVDLVLFMLDAADGFTKTDEHVAKIVNDSGTKTIIAVNKIDVAGEEKAKAVGELAKSMVENVVSVHYISALKGEGVFEVLEKIKEELPEGPQYYPEDMVTDRPLSFMAAEIIREKIFHLTRQEVPHSTAVVIEEIKDRPNGVLYIRANIYVERDSQKGILIGKNGSMIKKIGTLAREELEFLVGRKVYLDLNVKVKEKWREKDFIILQEIGLKDDIK</sequence>
<comment type="function">
    <text evidence="1">An essential GTPase that binds both GDP and GTP, with rapid nucleotide exchange. Plays a role in 16S rRNA processing and 30S ribosomal subunit biogenesis and possibly also in cell cycle regulation and energy metabolism.</text>
</comment>
<comment type="subunit">
    <text evidence="1">Monomer.</text>
</comment>
<comment type="subcellular location">
    <subcellularLocation>
        <location>Cytoplasm</location>
    </subcellularLocation>
    <subcellularLocation>
        <location evidence="1">Cell inner membrane</location>
        <topology evidence="1">Peripheral membrane protein</topology>
    </subcellularLocation>
</comment>
<comment type="similarity">
    <text evidence="1 2">Belongs to the TRAFAC class TrmE-Era-EngA-EngB-Septin-like GTPase superfamily. Era GTPase family.</text>
</comment>